<gene>
    <name evidence="1" type="primary">mdtC</name>
    <name type="ordered locus">SARI_00764</name>
</gene>
<comment type="subunit">
    <text evidence="1">Part of a tripartite efflux system composed of MdtA, MdtB and MdtC. MdtC forms a heteromultimer with MdtB.</text>
</comment>
<comment type="subcellular location">
    <subcellularLocation>
        <location evidence="1">Cell inner membrane</location>
        <topology evidence="1">Multi-pass membrane protein</topology>
    </subcellularLocation>
</comment>
<comment type="similarity">
    <text evidence="1">Belongs to the resistance-nodulation-cell division (RND) (TC 2.A.6) family. MdtC subfamily.</text>
</comment>
<accession>A9MKW9</accession>
<name>MDTC_SALAR</name>
<protein>
    <recommendedName>
        <fullName evidence="1">Multidrug resistance protein MdtC</fullName>
    </recommendedName>
    <alternativeName>
        <fullName evidence="1">Multidrug transporter MdtC</fullName>
    </alternativeName>
</protein>
<sequence length="1026" mass="111349">MRFFALFIYRPVATILIAAAITLCGILGFRLLPVAPLPQVDFPVIMVRASLPGASPETMASSVATPLERSLGRIAGVNEMTSSSSLGSTRIILEFNFDRDINGAARDVQAAINAAQSLLPSGMPSRPTYRKANPSDAPIMILTLTSDSWSQGELYDFASTQLAQTIAQIDGVGDVDVGGSSLPAVRIGLNPQALFNQGVSLDEVRKAIDSANVRRPQGAIEDNVHRWQIQTNDELKTAAEYQPLIIHYKNGAAVRLDDVASVTDSVQDVRNAGMTNAKPAILLMIRKLPETNIIQTVDSIRAKLPELQAMIPAAIDLQIAQDRSPTIRASLQEVEETLAISVALVILVVFLFLRSGRATLIPAVAVPVSLISTFAAMYLCGFSLNNLSLMALTIATGFVVDDAIVVLENITRHLEAGMKPLQAALQGTQEVGFTVISMSLSLVAVFLPLLLMGGLPGRLLREFAVTLSVAIGISLVVSLTLTPMMCGWMLKSSKPRTQPRKRGVGRLLVALQQSYGTSLKWVLNHTRLVGVVFLGTIALNIWLYIAIPKTFFPEQDTGVLMGGIQADQSISFQAMRGKLQDFMKIIRDDPAVNNVTGFTGGSRVNSGMMFITLKPRGERKESAQQIIDRLRVKLTKEPGARLFLMAVQDIRIGGRQANASYQYTLLSDSLAALREWEPKIRKALSALPQLADINSDHQDNGAEMNLIYDRDTMSRLGIDVQAANSLLNNAFGQRQISTIYQPMNQYKVVMEVDPRYSQDISALEKMFVINHDGKAIPLSYFAQWRPANAPLSVNHQGLSAASTIAFNLPTGTSLSQATEAINRTMTQLGVPPTVRGSFAGTAQVFQQTMNSQLILIMAAIATVYIVLGILYESYVHPLTILSTLPSAGVGALLALELFNAPFSLIALIGIMLLIGIVKKNAIMMVDFALEAQRSGGLTPEQAIFQACLLRFRPIMMTTLAAMFGALPLVLSGGDGSELRQPLGITIVGGLVMSQLLTLYTTPVVYLFFDRLRLRFSRKNSKPVVEI</sequence>
<dbReference type="EMBL" id="CP000880">
    <property type="protein sequence ID" value="ABX20685.1"/>
    <property type="molecule type" value="Genomic_DNA"/>
</dbReference>
<dbReference type="SMR" id="A9MKW9"/>
<dbReference type="STRING" id="41514.SARI_00764"/>
<dbReference type="KEGG" id="ses:SARI_00764"/>
<dbReference type="HOGENOM" id="CLU_002755_1_2_6"/>
<dbReference type="Proteomes" id="UP000002084">
    <property type="component" value="Chromosome"/>
</dbReference>
<dbReference type="GO" id="GO:0005886">
    <property type="term" value="C:plasma membrane"/>
    <property type="evidence" value="ECO:0007669"/>
    <property type="project" value="UniProtKB-SubCell"/>
</dbReference>
<dbReference type="GO" id="GO:0042910">
    <property type="term" value="F:xenobiotic transmembrane transporter activity"/>
    <property type="evidence" value="ECO:0007669"/>
    <property type="project" value="TreeGrafter"/>
</dbReference>
<dbReference type="FunFam" id="1.20.1640.10:FF:000001">
    <property type="entry name" value="Efflux pump membrane transporter"/>
    <property type="match status" value="1"/>
</dbReference>
<dbReference type="FunFam" id="3.30.70.1430:FF:000001">
    <property type="entry name" value="Efflux pump membrane transporter"/>
    <property type="match status" value="1"/>
</dbReference>
<dbReference type="FunFam" id="3.30.2090.10:FF:000004">
    <property type="entry name" value="Multidrug resistance protein MdtC"/>
    <property type="match status" value="1"/>
</dbReference>
<dbReference type="FunFam" id="3.30.2090.10:FF:000005">
    <property type="entry name" value="Multidrug resistance protein MdtC"/>
    <property type="match status" value="1"/>
</dbReference>
<dbReference type="Gene3D" id="3.30.70.1430">
    <property type="entry name" value="Multidrug efflux transporter AcrB pore domain"/>
    <property type="match status" value="2"/>
</dbReference>
<dbReference type="Gene3D" id="3.30.70.1440">
    <property type="entry name" value="Multidrug efflux transporter AcrB pore domain"/>
    <property type="match status" value="1"/>
</dbReference>
<dbReference type="Gene3D" id="3.30.70.1320">
    <property type="entry name" value="Multidrug efflux transporter AcrB pore domain like"/>
    <property type="match status" value="1"/>
</dbReference>
<dbReference type="Gene3D" id="3.30.2090.10">
    <property type="entry name" value="Multidrug efflux transporter AcrB TolC docking domain, DN and DC subdomains"/>
    <property type="match status" value="2"/>
</dbReference>
<dbReference type="Gene3D" id="1.20.1640.10">
    <property type="entry name" value="Multidrug efflux transporter AcrB transmembrane domain"/>
    <property type="match status" value="2"/>
</dbReference>
<dbReference type="HAMAP" id="MF_01424">
    <property type="entry name" value="MdtC"/>
    <property type="match status" value="1"/>
</dbReference>
<dbReference type="InterPro" id="IPR027463">
    <property type="entry name" value="AcrB_DN_DC_subdom"/>
</dbReference>
<dbReference type="InterPro" id="IPR001036">
    <property type="entry name" value="Acrflvin-R"/>
</dbReference>
<dbReference type="InterPro" id="IPR023931">
    <property type="entry name" value="Multidrug-R_MdtC"/>
</dbReference>
<dbReference type="NCBIfam" id="NF007905">
    <property type="entry name" value="PRK10614.1"/>
    <property type="match status" value="1"/>
</dbReference>
<dbReference type="NCBIfam" id="NF033617">
    <property type="entry name" value="RND_permease_2"/>
    <property type="match status" value="1"/>
</dbReference>
<dbReference type="PANTHER" id="PTHR32063">
    <property type="match status" value="1"/>
</dbReference>
<dbReference type="PANTHER" id="PTHR32063:SF34">
    <property type="entry name" value="MULTIDRUG RESISTANCE PROTEIN MDTC"/>
    <property type="match status" value="1"/>
</dbReference>
<dbReference type="Pfam" id="PF00873">
    <property type="entry name" value="ACR_tran"/>
    <property type="match status" value="1"/>
</dbReference>
<dbReference type="PRINTS" id="PR00702">
    <property type="entry name" value="ACRIFLAVINRP"/>
</dbReference>
<dbReference type="SUPFAM" id="SSF82693">
    <property type="entry name" value="Multidrug efflux transporter AcrB pore domain, PN1, PN2, PC1 and PC2 subdomains"/>
    <property type="match status" value="4"/>
</dbReference>
<dbReference type="SUPFAM" id="SSF82714">
    <property type="entry name" value="Multidrug efflux transporter AcrB TolC docking domain, DN and DC subdomains"/>
    <property type="match status" value="2"/>
</dbReference>
<dbReference type="SUPFAM" id="SSF82866">
    <property type="entry name" value="Multidrug efflux transporter AcrB transmembrane domain"/>
    <property type="match status" value="2"/>
</dbReference>
<evidence type="ECO:0000255" key="1">
    <source>
        <dbReference type="HAMAP-Rule" id="MF_01424"/>
    </source>
</evidence>
<keyword id="KW-0997">Cell inner membrane</keyword>
<keyword id="KW-1003">Cell membrane</keyword>
<keyword id="KW-0472">Membrane</keyword>
<keyword id="KW-1185">Reference proteome</keyword>
<keyword id="KW-0812">Transmembrane</keyword>
<keyword id="KW-1133">Transmembrane helix</keyword>
<keyword id="KW-0813">Transport</keyword>
<organism>
    <name type="scientific">Salmonella arizonae (strain ATCC BAA-731 / CDC346-86 / RSK2980)</name>
    <dbReference type="NCBI Taxonomy" id="41514"/>
    <lineage>
        <taxon>Bacteria</taxon>
        <taxon>Pseudomonadati</taxon>
        <taxon>Pseudomonadota</taxon>
        <taxon>Gammaproteobacteria</taxon>
        <taxon>Enterobacterales</taxon>
        <taxon>Enterobacteriaceae</taxon>
        <taxon>Salmonella</taxon>
    </lineage>
</organism>
<reference key="1">
    <citation type="submission" date="2007-11" db="EMBL/GenBank/DDBJ databases">
        <authorList>
            <consortium name="The Salmonella enterica serovar Arizonae Genome Sequencing Project"/>
            <person name="McClelland M."/>
            <person name="Sanderson E.K."/>
            <person name="Porwollik S."/>
            <person name="Spieth J."/>
            <person name="Clifton W.S."/>
            <person name="Fulton R."/>
            <person name="Chunyan W."/>
            <person name="Wollam A."/>
            <person name="Shah N."/>
            <person name="Pepin K."/>
            <person name="Bhonagiri V."/>
            <person name="Nash W."/>
            <person name="Johnson M."/>
            <person name="Thiruvilangam P."/>
            <person name="Wilson R."/>
        </authorList>
    </citation>
    <scope>NUCLEOTIDE SEQUENCE [LARGE SCALE GENOMIC DNA]</scope>
    <source>
        <strain>ATCC BAA-731 / CDC346-86 / RSK2980</strain>
    </source>
</reference>
<proteinExistence type="inferred from homology"/>
<feature type="chain" id="PRO_1000087417" description="Multidrug resistance protein MdtC">
    <location>
        <begin position="1"/>
        <end position="1026"/>
    </location>
</feature>
<feature type="transmembrane region" description="Helical" evidence="1">
    <location>
        <begin position="15"/>
        <end position="35"/>
    </location>
</feature>
<feature type="transmembrane region" description="Helical" evidence="1">
    <location>
        <begin position="333"/>
        <end position="353"/>
    </location>
</feature>
<feature type="transmembrane region" description="Helical" evidence="1">
    <location>
        <begin position="360"/>
        <end position="380"/>
    </location>
</feature>
<feature type="transmembrane region" description="Helical" evidence="1">
    <location>
        <begin position="387"/>
        <end position="407"/>
    </location>
</feature>
<feature type="transmembrane region" description="Helical" evidence="1">
    <location>
        <begin position="431"/>
        <end position="451"/>
    </location>
</feature>
<feature type="transmembrane region" description="Helical" evidence="1">
    <location>
        <begin position="463"/>
        <end position="483"/>
    </location>
</feature>
<feature type="transmembrane region" description="Helical" evidence="1">
    <location>
        <begin position="528"/>
        <end position="548"/>
    </location>
</feature>
<feature type="transmembrane region" description="Helical" evidence="1">
    <location>
        <begin position="853"/>
        <end position="873"/>
    </location>
</feature>
<feature type="transmembrane region" description="Helical" evidence="1">
    <location>
        <begin position="897"/>
        <end position="917"/>
    </location>
</feature>
<feature type="transmembrane region" description="Helical" evidence="1">
    <location>
        <begin position="953"/>
        <end position="973"/>
    </location>
</feature>
<feature type="transmembrane region" description="Helical" evidence="1">
    <location>
        <begin position="984"/>
        <end position="1004"/>
    </location>
</feature>